<evidence type="ECO:0000255" key="1">
    <source>
        <dbReference type="HAMAP-Rule" id="MF_00152"/>
    </source>
</evidence>
<accession>A0RYW7</accession>
<name>END4_CENSY</name>
<dbReference type="EC" id="3.1.21.2" evidence="1"/>
<dbReference type="EMBL" id="DP000238">
    <property type="protein sequence ID" value="ABK78534.1"/>
    <property type="molecule type" value="Genomic_DNA"/>
</dbReference>
<dbReference type="SMR" id="A0RYW7"/>
<dbReference type="STRING" id="414004.CENSYa_1925"/>
<dbReference type="EnsemblBacteria" id="ABK78534">
    <property type="protein sequence ID" value="ABK78534"/>
    <property type="gene ID" value="CENSYa_1925"/>
</dbReference>
<dbReference type="KEGG" id="csy:CENSYa_1925"/>
<dbReference type="PATRIC" id="fig|414004.10.peg.1759"/>
<dbReference type="HOGENOM" id="CLU_025885_0_1_2"/>
<dbReference type="Proteomes" id="UP000000758">
    <property type="component" value="Chromosome"/>
</dbReference>
<dbReference type="GO" id="GO:0008833">
    <property type="term" value="F:deoxyribonuclease IV (phage-T4-induced) activity"/>
    <property type="evidence" value="ECO:0007669"/>
    <property type="project" value="UniProtKB-UniRule"/>
</dbReference>
<dbReference type="GO" id="GO:0003677">
    <property type="term" value="F:DNA binding"/>
    <property type="evidence" value="ECO:0007669"/>
    <property type="project" value="InterPro"/>
</dbReference>
<dbReference type="GO" id="GO:0003906">
    <property type="term" value="F:DNA-(apurinic or apyrimidinic site) endonuclease activity"/>
    <property type="evidence" value="ECO:0007669"/>
    <property type="project" value="TreeGrafter"/>
</dbReference>
<dbReference type="GO" id="GO:0008081">
    <property type="term" value="F:phosphoric diester hydrolase activity"/>
    <property type="evidence" value="ECO:0007669"/>
    <property type="project" value="TreeGrafter"/>
</dbReference>
<dbReference type="GO" id="GO:0008270">
    <property type="term" value="F:zinc ion binding"/>
    <property type="evidence" value="ECO:0007669"/>
    <property type="project" value="UniProtKB-UniRule"/>
</dbReference>
<dbReference type="GO" id="GO:0006284">
    <property type="term" value="P:base-excision repair"/>
    <property type="evidence" value="ECO:0007669"/>
    <property type="project" value="TreeGrafter"/>
</dbReference>
<dbReference type="CDD" id="cd00019">
    <property type="entry name" value="AP2Ec"/>
    <property type="match status" value="1"/>
</dbReference>
<dbReference type="FunFam" id="3.20.20.150:FF:000001">
    <property type="entry name" value="Probable endonuclease 4"/>
    <property type="match status" value="1"/>
</dbReference>
<dbReference type="Gene3D" id="3.20.20.150">
    <property type="entry name" value="Divalent-metal-dependent TIM barrel enzymes"/>
    <property type="match status" value="1"/>
</dbReference>
<dbReference type="HAMAP" id="MF_00152">
    <property type="entry name" value="Nfo"/>
    <property type="match status" value="1"/>
</dbReference>
<dbReference type="InterPro" id="IPR001719">
    <property type="entry name" value="AP_endonuc_2"/>
</dbReference>
<dbReference type="InterPro" id="IPR018246">
    <property type="entry name" value="AP_endonuc_F2_Zn_BS"/>
</dbReference>
<dbReference type="InterPro" id="IPR036237">
    <property type="entry name" value="Xyl_isomerase-like_sf"/>
</dbReference>
<dbReference type="InterPro" id="IPR013022">
    <property type="entry name" value="Xyl_isomerase-like_TIM-brl"/>
</dbReference>
<dbReference type="NCBIfam" id="TIGR00587">
    <property type="entry name" value="nfo"/>
    <property type="match status" value="1"/>
</dbReference>
<dbReference type="PANTHER" id="PTHR21445:SF0">
    <property type="entry name" value="APURINIC-APYRIMIDINIC ENDONUCLEASE"/>
    <property type="match status" value="1"/>
</dbReference>
<dbReference type="PANTHER" id="PTHR21445">
    <property type="entry name" value="ENDONUCLEASE IV ENDODEOXYRIBONUCLEASE IV"/>
    <property type="match status" value="1"/>
</dbReference>
<dbReference type="Pfam" id="PF01261">
    <property type="entry name" value="AP_endonuc_2"/>
    <property type="match status" value="1"/>
</dbReference>
<dbReference type="SMART" id="SM00518">
    <property type="entry name" value="AP2Ec"/>
    <property type="match status" value="1"/>
</dbReference>
<dbReference type="SUPFAM" id="SSF51658">
    <property type="entry name" value="Xylose isomerase-like"/>
    <property type="match status" value="1"/>
</dbReference>
<dbReference type="PROSITE" id="PS00730">
    <property type="entry name" value="AP_NUCLEASE_F2_2"/>
    <property type="match status" value="1"/>
</dbReference>
<dbReference type="PROSITE" id="PS00731">
    <property type="entry name" value="AP_NUCLEASE_F2_3"/>
    <property type="match status" value="1"/>
</dbReference>
<dbReference type="PROSITE" id="PS51432">
    <property type="entry name" value="AP_NUCLEASE_F2_4"/>
    <property type="match status" value="1"/>
</dbReference>
<protein>
    <recommendedName>
        <fullName evidence="1">Probable endonuclease 4</fullName>
        <ecNumber evidence="1">3.1.21.2</ecNumber>
    </recommendedName>
    <alternativeName>
        <fullName evidence="1">Endodeoxyribonuclease IV</fullName>
    </alternativeName>
    <alternativeName>
        <fullName evidence="1">Endonuclease IV</fullName>
    </alternativeName>
</protein>
<keyword id="KW-0227">DNA damage</keyword>
<keyword id="KW-0234">DNA repair</keyword>
<keyword id="KW-0255">Endonuclease</keyword>
<keyword id="KW-0378">Hydrolase</keyword>
<keyword id="KW-0479">Metal-binding</keyword>
<keyword id="KW-0540">Nuclease</keyword>
<keyword id="KW-1185">Reference proteome</keyword>
<keyword id="KW-0862">Zinc</keyword>
<feature type="chain" id="PRO_1000096870" description="Probable endonuclease 4">
    <location>
        <begin position="1"/>
        <end position="280"/>
    </location>
</feature>
<feature type="binding site" evidence="1">
    <location>
        <position position="68"/>
    </location>
    <ligand>
        <name>Zn(2+)</name>
        <dbReference type="ChEBI" id="CHEBI:29105"/>
        <label>1</label>
    </ligand>
</feature>
<feature type="binding site" evidence="1">
    <location>
        <position position="108"/>
    </location>
    <ligand>
        <name>Zn(2+)</name>
        <dbReference type="ChEBI" id="CHEBI:29105"/>
        <label>1</label>
    </ligand>
</feature>
<feature type="binding site" evidence="1">
    <location>
        <position position="143"/>
    </location>
    <ligand>
        <name>Zn(2+)</name>
        <dbReference type="ChEBI" id="CHEBI:29105"/>
        <label>1</label>
    </ligand>
</feature>
<feature type="binding site" evidence="1">
    <location>
        <position position="143"/>
    </location>
    <ligand>
        <name>Zn(2+)</name>
        <dbReference type="ChEBI" id="CHEBI:29105"/>
        <label>2</label>
    </ligand>
</feature>
<feature type="binding site" evidence="1">
    <location>
        <position position="177"/>
    </location>
    <ligand>
        <name>Zn(2+)</name>
        <dbReference type="ChEBI" id="CHEBI:29105"/>
        <label>2</label>
    </ligand>
</feature>
<feature type="binding site" evidence="1">
    <location>
        <position position="180"/>
    </location>
    <ligand>
        <name>Zn(2+)</name>
        <dbReference type="ChEBI" id="CHEBI:29105"/>
        <label>3</label>
    </ligand>
</feature>
<feature type="binding site" evidence="1">
    <location>
        <position position="214"/>
    </location>
    <ligand>
        <name>Zn(2+)</name>
        <dbReference type="ChEBI" id="CHEBI:29105"/>
        <label>2</label>
    </ligand>
</feature>
<feature type="binding site" evidence="1">
    <location>
        <position position="227"/>
    </location>
    <ligand>
        <name>Zn(2+)</name>
        <dbReference type="ChEBI" id="CHEBI:29105"/>
        <label>3</label>
    </ligand>
</feature>
<feature type="binding site" evidence="1">
    <location>
        <position position="229"/>
    </location>
    <ligand>
        <name>Zn(2+)</name>
        <dbReference type="ChEBI" id="CHEBI:29105"/>
        <label>3</label>
    </ligand>
</feature>
<feature type="binding site" evidence="1">
    <location>
        <position position="259"/>
    </location>
    <ligand>
        <name>Zn(2+)</name>
        <dbReference type="ChEBI" id="CHEBI:29105"/>
        <label>2</label>
    </ligand>
</feature>
<gene>
    <name evidence="1" type="primary">nfo</name>
    <name type="ordered locus">CENSYa_1925</name>
</gene>
<sequence>MQVGCHVSISGGIDRSVDNAVERGCTAFQIFSRNPRGWRAKEISKDEAGTFKKKLKESKIEPSGTCVHMPYLPNLASTNDESHKKSVDTLIGEVERCGLLGIPFLVTHLGSHLGAGEEKGIERLVKAYKSAAGVKNGVTILLENTAGQKNSVGSEFGQLGSILSQLRPAKRFGVCLDTCHAFAYGYDLSTRAGAKKSFDEFDKKVGLDNLRVLHLNDAKAGCGSKLDRHYHVGLGSIGKEGMRAAARLASKRGIPMVVETPVDETRDDVGNIKAARALAG</sequence>
<proteinExistence type="inferred from homology"/>
<organism>
    <name type="scientific">Cenarchaeum symbiosum (strain A)</name>
    <dbReference type="NCBI Taxonomy" id="414004"/>
    <lineage>
        <taxon>Archaea</taxon>
        <taxon>Nitrososphaerota</taxon>
        <taxon>Candidatus Cenarchaeales</taxon>
        <taxon>Candidatus Cenarchaeaceae</taxon>
        <taxon>Candidatus Cenarchaeum</taxon>
    </lineage>
</organism>
<comment type="function">
    <text evidence="1">Endonuclease IV plays a role in DNA repair. It cleaves phosphodiester bonds at apurinic or apyrimidinic (AP) sites, generating a 3'-hydroxyl group and a 5'-terminal sugar phosphate.</text>
</comment>
<comment type="catalytic activity">
    <reaction evidence="1">
        <text>Endonucleolytic cleavage to 5'-phosphooligonucleotide end-products.</text>
        <dbReference type="EC" id="3.1.21.2"/>
    </reaction>
</comment>
<comment type="cofactor">
    <cofactor evidence="1">
        <name>Zn(2+)</name>
        <dbReference type="ChEBI" id="CHEBI:29105"/>
    </cofactor>
    <text evidence="1">Binds 3 Zn(2+) ions.</text>
</comment>
<comment type="similarity">
    <text evidence="1">Belongs to the AP endonuclease 2 family.</text>
</comment>
<reference key="1">
    <citation type="journal article" date="2006" name="Proc. Natl. Acad. Sci. U.S.A.">
        <title>Genomic analysis of the uncultivated marine crenarchaeote Cenarchaeum symbiosum.</title>
        <authorList>
            <person name="Hallam S.J."/>
            <person name="Konstantinidis K.T."/>
            <person name="Putnam N."/>
            <person name="Schleper C."/>
            <person name="Watanabe Y."/>
            <person name="Sugahara J."/>
            <person name="Preston C."/>
            <person name="de la Torre J."/>
            <person name="Richardson P.M."/>
            <person name="DeLong E.F."/>
        </authorList>
    </citation>
    <scope>NUCLEOTIDE SEQUENCE [LARGE SCALE GENOMIC DNA]</scope>
    <source>
        <strain>A</strain>
    </source>
</reference>